<reference key="1">
    <citation type="journal article" date="2005" name="Science">
        <title>The transcriptional landscape of the mammalian genome.</title>
        <authorList>
            <person name="Carninci P."/>
            <person name="Kasukawa T."/>
            <person name="Katayama S."/>
            <person name="Gough J."/>
            <person name="Frith M.C."/>
            <person name="Maeda N."/>
            <person name="Oyama R."/>
            <person name="Ravasi T."/>
            <person name="Lenhard B."/>
            <person name="Wells C."/>
            <person name="Kodzius R."/>
            <person name="Shimokawa K."/>
            <person name="Bajic V.B."/>
            <person name="Brenner S.E."/>
            <person name="Batalov S."/>
            <person name="Forrest A.R."/>
            <person name="Zavolan M."/>
            <person name="Davis M.J."/>
            <person name="Wilming L.G."/>
            <person name="Aidinis V."/>
            <person name="Allen J.E."/>
            <person name="Ambesi-Impiombato A."/>
            <person name="Apweiler R."/>
            <person name="Aturaliya R.N."/>
            <person name="Bailey T.L."/>
            <person name="Bansal M."/>
            <person name="Baxter L."/>
            <person name="Beisel K.W."/>
            <person name="Bersano T."/>
            <person name="Bono H."/>
            <person name="Chalk A.M."/>
            <person name="Chiu K.P."/>
            <person name="Choudhary V."/>
            <person name="Christoffels A."/>
            <person name="Clutterbuck D.R."/>
            <person name="Crowe M.L."/>
            <person name="Dalla E."/>
            <person name="Dalrymple B.P."/>
            <person name="de Bono B."/>
            <person name="Della Gatta G."/>
            <person name="di Bernardo D."/>
            <person name="Down T."/>
            <person name="Engstrom P."/>
            <person name="Fagiolini M."/>
            <person name="Faulkner G."/>
            <person name="Fletcher C.F."/>
            <person name="Fukushima T."/>
            <person name="Furuno M."/>
            <person name="Futaki S."/>
            <person name="Gariboldi M."/>
            <person name="Georgii-Hemming P."/>
            <person name="Gingeras T.R."/>
            <person name="Gojobori T."/>
            <person name="Green R.E."/>
            <person name="Gustincich S."/>
            <person name="Harbers M."/>
            <person name="Hayashi Y."/>
            <person name="Hensch T.K."/>
            <person name="Hirokawa N."/>
            <person name="Hill D."/>
            <person name="Huminiecki L."/>
            <person name="Iacono M."/>
            <person name="Ikeo K."/>
            <person name="Iwama A."/>
            <person name="Ishikawa T."/>
            <person name="Jakt M."/>
            <person name="Kanapin A."/>
            <person name="Katoh M."/>
            <person name="Kawasawa Y."/>
            <person name="Kelso J."/>
            <person name="Kitamura H."/>
            <person name="Kitano H."/>
            <person name="Kollias G."/>
            <person name="Krishnan S.P."/>
            <person name="Kruger A."/>
            <person name="Kummerfeld S.K."/>
            <person name="Kurochkin I.V."/>
            <person name="Lareau L.F."/>
            <person name="Lazarevic D."/>
            <person name="Lipovich L."/>
            <person name="Liu J."/>
            <person name="Liuni S."/>
            <person name="McWilliam S."/>
            <person name="Madan Babu M."/>
            <person name="Madera M."/>
            <person name="Marchionni L."/>
            <person name="Matsuda H."/>
            <person name="Matsuzawa S."/>
            <person name="Miki H."/>
            <person name="Mignone F."/>
            <person name="Miyake S."/>
            <person name="Morris K."/>
            <person name="Mottagui-Tabar S."/>
            <person name="Mulder N."/>
            <person name="Nakano N."/>
            <person name="Nakauchi H."/>
            <person name="Ng P."/>
            <person name="Nilsson R."/>
            <person name="Nishiguchi S."/>
            <person name="Nishikawa S."/>
            <person name="Nori F."/>
            <person name="Ohara O."/>
            <person name="Okazaki Y."/>
            <person name="Orlando V."/>
            <person name="Pang K.C."/>
            <person name="Pavan W.J."/>
            <person name="Pavesi G."/>
            <person name="Pesole G."/>
            <person name="Petrovsky N."/>
            <person name="Piazza S."/>
            <person name="Reed J."/>
            <person name="Reid J.F."/>
            <person name="Ring B.Z."/>
            <person name="Ringwald M."/>
            <person name="Rost B."/>
            <person name="Ruan Y."/>
            <person name="Salzberg S.L."/>
            <person name="Sandelin A."/>
            <person name="Schneider C."/>
            <person name="Schoenbach C."/>
            <person name="Sekiguchi K."/>
            <person name="Semple C.A."/>
            <person name="Seno S."/>
            <person name="Sessa L."/>
            <person name="Sheng Y."/>
            <person name="Shibata Y."/>
            <person name="Shimada H."/>
            <person name="Shimada K."/>
            <person name="Silva D."/>
            <person name="Sinclair B."/>
            <person name="Sperling S."/>
            <person name="Stupka E."/>
            <person name="Sugiura K."/>
            <person name="Sultana R."/>
            <person name="Takenaka Y."/>
            <person name="Taki K."/>
            <person name="Tammoja K."/>
            <person name="Tan S.L."/>
            <person name="Tang S."/>
            <person name="Taylor M.S."/>
            <person name="Tegner J."/>
            <person name="Teichmann S.A."/>
            <person name="Ueda H.R."/>
            <person name="van Nimwegen E."/>
            <person name="Verardo R."/>
            <person name="Wei C.L."/>
            <person name="Yagi K."/>
            <person name="Yamanishi H."/>
            <person name="Zabarovsky E."/>
            <person name="Zhu S."/>
            <person name="Zimmer A."/>
            <person name="Hide W."/>
            <person name="Bult C."/>
            <person name="Grimmond S.M."/>
            <person name="Teasdale R.D."/>
            <person name="Liu E.T."/>
            <person name="Brusic V."/>
            <person name="Quackenbush J."/>
            <person name="Wahlestedt C."/>
            <person name="Mattick J.S."/>
            <person name="Hume D.A."/>
            <person name="Kai C."/>
            <person name="Sasaki D."/>
            <person name="Tomaru Y."/>
            <person name="Fukuda S."/>
            <person name="Kanamori-Katayama M."/>
            <person name="Suzuki M."/>
            <person name="Aoki J."/>
            <person name="Arakawa T."/>
            <person name="Iida J."/>
            <person name="Imamura K."/>
            <person name="Itoh M."/>
            <person name="Kato T."/>
            <person name="Kawaji H."/>
            <person name="Kawagashira N."/>
            <person name="Kawashima T."/>
            <person name="Kojima M."/>
            <person name="Kondo S."/>
            <person name="Konno H."/>
            <person name="Nakano K."/>
            <person name="Ninomiya N."/>
            <person name="Nishio T."/>
            <person name="Okada M."/>
            <person name="Plessy C."/>
            <person name="Shibata K."/>
            <person name="Shiraki T."/>
            <person name="Suzuki S."/>
            <person name="Tagami M."/>
            <person name="Waki K."/>
            <person name="Watahiki A."/>
            <person name="Okamura-Oho Y."/>
            <person name="Suzuki H."/>
            <person name="Kawai J."/>
            <person name="Hayashizaki Y."/>
        </authorList>
    </citation>
    <scope>NUCLEOTIDE SEQUENCE [LARGE SCALE MRNA] (ISOFORMS 1 AND 2)</scope>
    <source>
        <strain>C57BL/6J</strain>
        <tissue>Diencephalon</tissue>
        <tissue>Embryonic head</tissue>
    </source>
</reference>
<reference key="2">
    <citation type="submission" date="2005-02" db="EMBL/GenBank/DDBJ databases">
        <title>Prediction of the coding sequences of mouse homologues of KIAA gene. The complete nucleotide sequences of mouse KIAA-homologous cDNAs identified by screening of terminal sequences of cDNA clones randomly sampled from size-fractionated libraries.</title>
        <authorList>
            <person name="Okazaki N."/>
            <person name="Kikuno R.F."/>
            <person name="Ohara R."/>
            <person name="Inamoto S."/>
            <person name="Nagase T."/>
            <person name="Ohara O."/>
            <person name="Koga H."/>
        </authorList>
    </citation>
    <scope>NUCLEOTIDE SEQUENCE [LARGE SCALE MRNA] (ISOFORM 1)</scope>
</reference>
<reference key="3">
    <citation type="journal article" date="2004" name="Genome Res.">
        <title>The status, quality, and expansion of the NIH full-length cDNA project: the Mammalian Gene Collection (MGC).</title>
        <authorList>
            <consortium name="The MGC Project Team"/>
        </authorList>
    </citation>
    <scope>NUCLEOTIDE SEQUENCE [LARGE SCALE MRNA] (ISOFORM 1)</scope>
    <source>
        <strain>C57BL/6J</strain>
        <tissue>Brain</tissue>
    </source>
</reference>
<reference key="4">
    <citation type="journal article" date="2006" name="Gene">
        <title>Comparative analysis of structure, expression and PSD95-binding capacity of Lrfn, a novel family of neuronal transmembrane proteins.</title>
        <authorList>
            <person name="Morimura N."/>
            <person name="Inoue T."/>
            <person name="Katayama K."/>
            <person name="Aruga J."/>
        </authorList>
    </citation>
    <scope>DEVELOPMENTAL STAGE</scope>
    <scope>TISSUE SPECIFICITY</scope>
    <scope>GLYCOSYLATION</scope>
    <scope>LACK OF INTERACTION WITH DLG4</scope>
    <scope>SUBCELLULAR LOCATION</scope>
    <scope>TOPOLOGY</scope>
</reference>
<reference key="5">
    <citation type="journal article" date="2010" name="Cell">
        <title>A tissue-specific atlas of mouse protein phosphorylation and expression.</title>
        <authorList>
            <person name="Huttlin E.L."/>
            <person name="Jedrychowski M.P."/>
            <person name="Elias J.E."/>
            <person name="Goswami T."/>
            <person name="Rad R."/>
            <person name="Beausoleil S.A."/>
            <person name="Villen J."/>
            <person name="Haas W."/>
            <person name="Sowa M.E."/>
            <person name="Gygi S.P."/>
        </authorList>
    </citation>
    <scope>IDENTIFICATION BY MASS SPECTROMETRY [LARGE SCALE ANALYSIS]</scope>
    <source>
        <tissue>Brain</tissue>
    </source>
</reference>
<proteinExistence type="evidence at protein level"/>
<accession>Q8BXA0</accession>
<accession>Q5DTH4</accession>
<accession>Q8BJH4</accession>
<accession>Q8BZL0</accession>
<sequence length="719" mass="79371">MEKFLFYLFLIGIAVRAQICPKRCVCQILSPNLATLCAKKGLLFVPPNIDRRTVELRLADNFVTNIKRKDFANMTSLVDLTLSRNTISFITPHAFADLRNLRALHLNSNRLTKITNDMFSGLSNLHHLILNNNQLTLISSTAFDDVFALEELDLSYNNLETIPWDAVEKMVSLHTLSLDHNMIDNIPKGTFSHLHKMTRLDVTSNKLQKLPPDPLFQRAQVLATSGIISPSTFALSFGGNPLHCNCELLWLRRLSREDDLETCASPALLTGRYFWSIPEEEFLCEPPLITRHTHEMRVLEGQRATLRCKARGDPEPAIHWISPEGKLISNATRSLVYDNGTLDILITTVKDTGAFTCIASNPAGEATQTVDLHIIKLPHLLNSTNHIHEPDPGSSDISTSTKSGSNASSSNGDTKMSQDKIVVAEATSSTALLKFNFQRNIPGIRMFQIQYNGTYDDTLVYRMIPPTSKTFLVNNLASGTMYDLCVLAIYDDGITSLTATRVVGCIQFTTEQDYVRCHFMQSQFLGGTMIIIIGGIIVASVLVFIIILMIRYKVCNNNGQHKVTKVSNVYSQTNGAQMQGCSVTLPQSMSKQAMGHEENAQCCKVASDNAIQSSETCSSQDSSTTTSALPPTWTSSAPVSQKQKRKTGTKPSAEPQSEAVTNVESQNTNRNNSTALQLASCPPDSVTEGPTSQRAHTKPNALLTNVDQNVQETQRLESI</sequence>
<protein>
    <recommendedName>
        <fullName>Leucine-rich repeat and fibronectin type-III domain-containing protein 5</fullName>
    </recommendedName>
</protein>
<gene>
    <name type="primary">Lrfn5</name>
    <name type="synonym">Kiaa4208</name>
    <name type="synonym">Salm5</name>
</gene>
<feature type="signal peptide" evidence="2">
    <location>
        <begin position="1"/>
        <end position="17"/>
    </location>
</feature>
<feature type="chain" id="PRO_0000014846" description="Leucine-rich repeat and fibronectin type-III domain-containing protein 5">
    <location>
        <begin position="18"/>
        <end position="719"/>
    </location>
</feature>
<feature type="topological domain" description="Extracellular" evidence="2">
    <location>
        <begin position="18"/>
        <end position="529"/>
    </location>
</feature>
<feature type="transmembrane region" description="Helical" evidence="2">
    <location>
        <begin position="530"/>
        <end position="550"/>
    </location>
</feature>
<feature type="topological domain" description="Cytoplasmic" evidence="2">
    <location>
        <begin position="551"/>
        <end position="719"/>
    </location>
</feature>
<feature type="domain" description="LRRNT">
    <location>
        <begin position="18"/>
        <end position="51"/>
    </location>
</feature>
<feature type="repeat" description="LRR 1">
    <location>
        <begin position="52"/>
        <end position="73"/>
    </location>
</feature>
<feature type="repeat" description="LRR 2">
    <location>
        <begin position="76"/>
        <end position="97"/>
    </location>
</feature>
<feature type="repeat" description="LRR 3">
    <location>
        <begin position="100"/>
        <end position="121"/>
    </location>
</feature>
<feature type="repeat" description="LRR 4">
    <location>
        <begin position="124"/>
        <end position="145"/>
    </location>
</feature>
<feature type="repeat" description="LRR 5">
    <location>
        <begin position="148"/>
        <end position="169"/>
    </location>
</feature>
<feature type="repeat" description="LRR 6">
    <location>
        <begin position="172"/>
        <end position="193"/>
    </location>
</feature>
<feature type="repeat" description="LRR 7">
    <location>
        <begin position="196"/>
        <end position="217"/>
    </location>
</feature>
<feature type="domain" description="LRRCT">
    <location>
        <begin position="240"/>
        <end position="286"/>
    </location>
</feature>
<feature type="domain" description="Ig-like">
    <location>
        <begin position="287"/>
        <end position="373"/>
    </location>
</feature>
<feature type="domain" description="Fibronectin type-III">
    <location>
        <begin position="414"/>
        <end position="503"/>
    </location>
</feature>
<feature type="region of interest" description="Disordered" evidence="4">
    <location>
        <begin position="385"/>
        <end position="416"/>
    </location>
</feature>
<feature type="region of interest" description="Disordered" evidence="4">
    <location>
        <begin position="614"/>
        <end position="719"/>
    </location>
</feature>
<feature type="compositionally biased region" description="Low complexity" evidence="4">
    <location>
        <begin position="393"/>
        <end position="412"/>
    </location>
</feature>
<feature type="compositionally biased region" description="Low complexity" evidence="4">
    <location>
        <begin position="614"/>
        <end position="627"/>
    </location>
</feature>
<feature type="compositionally biased region" description="Polar residues" evidence="4">
    <location>
        <begin position="628"/>
        <end position="641"/>
    </location>
</feature>
<feature type="compositionally biased region" description="Polar residues" evidence="4">
    <location>
        <begin position="654"/>
        <end position="677"/>
    </location>
</feature>
<feature type="compositionally biased region" description="Polar residues" evidence="4">
    <location>
        <begin position="702"/>
        <end position="713"/>
    </location>
</feature>
<feature type="glycosylation site" description="N-linked (GlcNAc...) asparagine" evidence="2">
    <location>
        <position position="73"/>
    </location>
</feature>
<feature type="glycosylation site" description="N-linked (GlcNAc...) asparagine" evidence="2">
    <location>
        <position position="330"/>
    </location>
</feature>
<feature type="glycosylation site" description="N-linked (GlcNAc...) asparagine" evidence="2">
    <location>
        <position position="339"/>
    </location>
</feature>
<feature type="glycosylation site" description="N-linked (GlcNAc...) asparagine" evidence="2">
    <location>
        <position position="382"/>
    </location>
</feature>
<feature type="glycosylation site" description="N-linked (GlcNAc...) asparagine" evidence="2">
    <location>
        <position position="406"/>
    </location>
</feature>
<feature type="glycosylation site" description="N-linked (GlcNAc...) asparagine" evidence="2">
    <location>
        <position position="452"/>
    </location>
</feature>
<feature type="disulfide bond" evidence="3">
    <location>
        <begin position="308"/>
        <end position="357"/>
    </location>
</feature>
<feature type="splice variant" id="VSP_009299" description="In isoform 2." evidence="6">
    <original>NALLTNVDQNVQETQRLESI</original>
    <variation>SKFLTVPAEGSRARHRASLSGGLKDSFHYGNSQLSLKRSMSMNAMWT</variation>
    <location>
        <begin position="700"/>
        <end position="719"/>
    </location>
</feature>
<feature type="strand" evidence="8">
    <location>
        <begin position="32"/>
        <end position="36"/>
    </location>
</feature>
<feature type="strand" evidence="8">
    <location>
        <begin position="38"/>
        <end position="40"/>
    </location>
</feature>
<feature type="strand" evidence="8">
    <location>
        <begin position="54"/>
        <end position="57"/>
    </location>
</feature>
<feature type="helix" evidence="8">
    <location>
        <begin position="68"/>
        <end position="71"/>
    </location>
</feature>
<feature type="strand" evidence="8">
    <location>
        <begin position="79"/>
        <end position="81"/>
    </location>
</feature>
<feature type="turn" evidence="8">
    <location>
        <begin position="92"/>
        <end position="97"/>
    </location>
</feature>
<feature type="strand" evidence="8">
    <location>
        <begin position="103"/>
        <end position="105"/>
    </location>
</feature>
<feature type="turn" evidence="8">
    <location>
        <begin position="116"/>
        <end position="121"/>
    </location>
</feature>
<feature type="strand" evidence="8">
    <location>
        <begin position="127"/>
        <end position="129"/>
    </location>
</feature>
<feature type="helix" evidence="8">
    <location>
        <begin position="140"/>
        <end position="143"/>
    </location>
</feature>
<feature type="strand" evidence="8">
    <location>
        <begin position="150"/>
        <end position="153"/>
    </location>
</feature>
<feature type="helix" evidence="8">
    <location>
        <begin position="164"/>
        <end position="167"/>
    </location>
</feature>
<feature type="strand" evidence="8">
    <location>
        <begin position="175"/>
        <end position="177"/>
    </location>
</feature>
<feature type="strand" evidence="8">
    <location>
        <begin position="199"/>
        <end position="201"/>
    </location>
</feature>
<feature type="helix" evidence="8">
    <location>
        <begin position="249"/>
        <end position="253"/>
    </location>
</feature>
<feature type="turn" evidence="8">
    <location>
        <begin position="266"/>
        <end position="268"/>
    </location>
</feature>
<feature type="strand" evidence="8">
    <location>
        <begin position="269"/>
        <end position="274"/>
    </location>
</feature>
<feature type="strand" evidence="8">
    <location>
        <begin position="285"/>
        <end position="292"/>
    </location>
</feature>
<feature type="strand" evidence="8">
    <location>
        <begin position="304"/>
        <end position="314"/>
    </location>
</feature>
<feature type="strand" evidence="8">
    <location>
        <begin position="317"/>
        <end position="322"/>
    </location>
</feature>
<feature type="turn" evidence="8">
    <location>
        <begin position="338"/>
        <end position="340"/>
    </location>
</feature>
<feature type="strand" evidence="8">
    <location>
        <begin position="341"/>
        <end position="344"/>
    </location>
</feature>
<feature type="helix" evidence="8">
    <location>
        <begin position="349"/>
        <end position="351"/>
    </location>
</feature>
<feature type="strand" evidence="8">
    <location>
        <begin position="355"/>
        <end position="361"/>
    </location>
</feature>
<feature type="strand" evidence="8">
    <location>
        <begin position="364"/>
        <end position="370"/>
    </location>
</feature>
<name>LRFN5_MOUSE</name>
<keyword id="KW-0002">3D-structure</keyword>
<keyword id="KW-0025">Alternative splicing</keyword>
<keyword id="KW-1015">Disulfide bond</keyword>
<keyword id="KW-0325">Glycoprotein</keyword>
<keyword id="KW-0393">Immunoglobulin domain</keyword>
<keyword id="KW-0433">Leucine-rich repeat</keyword>
<keyword id="KW-0472">Membrane</keyword>
<keyword id="KW-1185">Reference proteome</keyword>
<keyword id="KW-0677">Repeat</keyword>
<keyword id="KW-0732">Signal</keyword>
<keyword id="KW-0812">Transmembrane</keyword>
<keyword id="KW-1133">Transmembrane helix</keyword>
<evidence type="ECO:0000250" key="1"/>
<evidence type="ECO:0000255" key="2"/>
<evidence type="ECO:0000255" key="3">
    <source>
        <dbReference type="PROSITE-ProRule" id="PRU00114"/>
    </source>
</evidence>
<evidence type="ECO:0000256" key="4">
    <source>
        <dbReference type="SAM" id="MobiDB-lite"/>
    </source>
</evidence>
<evidence type="ECO:0000269" key="5">
    <source>
    </source>
</evidence>
<evidence type="ECO:0000303" key="6">
    <source>
    </source>
</evidence>
<evidence type="ECO:0000305" key="7"/>
<evidence type="ECO:0007829" key="8">
    <source>
        <dbReference type="PDB" id="6F2O"/>
    </source>
</evidence>
<organism>
    <name type="scientific">Mus musculus</name>
    <name type="common">Mouse</name>
    <dbReference type="NCBI Taxonomy" id="10090"/>
    <lineage>
        <taxon>Eukaryota</taxon>
        <taxon>Metazoa</taxon>
        <taxon>Chordata</taxon>
        <taxon>Craniata</taxon>
        <taxon>Vertebrata</taxon>
        <taxon>Euteleostomi</taxon>
        <taxon>Mammalia</taxon>
        <taxon>Eutheria</taxon>
        <taxon>Euarchontoglires</taxon>
        <taxon>Glires</taxon>
        <taxon>Rodentia</taxon>
        <taxon>Myomorpha</taxon>
        <taxon>Muroidea</taxon>
        <taxon>Muridae</taxon>
        <taxon>Murinae</taxon>
        <taxon>Mus</taxon>
        <taxon>Mus</taxon>
    </lineage>
</organism>
<dbReference type="EMBL" id="AK034245">
    <property type="protein sequence ID" value="BAC28645.1"/>
    <property type="molecule type" value="mRNA"/>
</dbReference>
<dbReference type="EMBL" id="AK048443">
    <property type="protein sequence ID" value="BAC33339.1"/>
    <property type="molecule type" value="mRNA"/>
</dbReference>
<dbReference type="EMBL" id="AK220546">
    <property type="protein sequence ID" value="BAD90535.1"/>
    <property type="status" value="ALT_INIT"/>
    <property type="molecule type" value="mRNA"/>
</dbReference>
<dbReference type="EMBL" id="BC052038">
    <property type="protein sequence ID" value="AAH52038.1"/>
    <property type="molecule type" value="mRNA"/>
</dbReference>
<dbReference type="CCDS" id="CCDS25936.1">
    <molecule id="Q8BXA0-2"/>
</dbReference>
<dbReference type="CCDS" id="CCDS79117.1">
    <molecule id="Q8BXA0-1"/>
</dbReference>
<dbReference type="RefSeq" id="NP_001297515.1">
    <molecule id="Q8BXA0-1"/>
    <property type="nucleotide sequence ID" value="NM_001310586.1"/>
</dbReference>
<dbReference type="RefSeq" id="NP_848829.2">
    <molecule id="Q8BXA0-2"/>
    <property type="nucleotide sequence ID" value="NM_178714.5"/>
</dbReference>
<dbReference type="RefSeq" id="XP_006515893.1">
    <molecule id="Q8BXA0-2"/>
    <property type="nucleotide sequence ID" value="XM_006515830.4"/>
</dbReference>
<dbReference type="RefSeq" id="XP_006515894.1">
    <molecule id="Q8BXA0-2"/>
    <property type="nucleotide sequence ID" value="XM_006515831.5"/>
</dbReference>
<dbReference type="RefSeq" id="XP_017170545.1">
    <molecule id="Q8BXA0-1"/>
    <property type="nucleotide sequence ID" value="XM_017315056.3"/>
</dbReference>
<dbReference type="RefSeq" id="XP_036013288.1">
    <molecule id="Q8BXA0-1"/>
    <property type="nucleotide sequence ID" value="XM_036157395.1"/>
</dbReference>
<dbReference type="PDB" id="6F2O">
    <property type="method" value="X-ray"/>
    <property type="resolution" value="3.00 A"/>
    <property type="chains" value="A=18-376"/>
</dbReference>
<dbReference type="PDBsum" id="6F2O"/>
<dbReference type="SASBDB" id="Q8BXA0"/>
<dbReference type="SMR" id="Q8BXA0"/>
<dbReference type="FunCoup" id="Q8BXA0">
    <property type="interactions" value="332"/>
</dbReference>
<dbReference type="STRING" id="10090.ENSMUSP00000051546"/>
<dbReference type="GlyConnect" id="2424">
    <molecule id="Q8BXA0-2"/>
    <property type="glycosylation" value="3 N-Linked glycans (1 site)"/>
</dbReference>
<dbReference type="GlyCosmos" id="Q8BXA0">
    <property type="glycosylation" value="6 sites, 3 glycans"/>
</dbReference>
<dbReference type="GlyGen" id="Q8BXA0">
    <property type="glycosylation" value="8 sites, 8 N-linked glycans (5 sites), 1 O-linked glycan (1 site)"/>
</dbReference>
<dbReference type="iPTMnet" id="Q8BXA0"/>
<dbReference type="PhosphoSitePlus" id="Q8BXA0"/>
<dbReference type="PaxDb" id="10090-ENSMUSP00000051546"/>
<dbReference type="PeptideAtlas" id="Q8BXA0"/>
<dbReference type="ProteomicsDB" id="290167">
    <molecule id="Q8BXA0-1"/>
</dbReference>
<dbReference type="ProteomicsDB" id="290168">
    <molecule id="Q8BXA0-2"/>
</dbReference>
<dbReference type="ABCD" id="Q8BXA0">
    <property type="antibodies" value="1 sequenced antibody"/>
</dbReference>
<dbReference type="Antibodypedia" id="78">
    <property type="antibodies" value="68 antibodies from 23 providers"/>
</dbReference>
<dbReference type="Ensembl" id="ENSMUST00000055815.14">
    <molecule id="Q8BXA0-2"/>
    <property type="protein sequence ID" value="ENSMUSP00000051546.8"/>
    <property type="gene ID" value="ENSMUSG00000035653.17"/>
</dbReference>
<dbReference type="Ensembl" id="ENSMUST00000119481.2">
    <molecule id="Q8BXA0-1"/>
    <property type="protein sequence ID" value="ENSMUSP00000113123.2"/>
    <property type="gene ID" value="ENSMUSG00000035653.17"/>
</dbReference>
<dbReference type="GeneID" id="238205"/>
<dbReference type="KEGG" id="mmu:238205"/>
<dbReference type="UCSC" id="uc007nqm.1">
    <molecule id="Q8BXA0-2"/>
    <property type="organism name" value="mouse"/>
</dbReference>
<dbReference type="UCSC" id="uc007nqn.1">
    <molecule id="Q8BXA0-1"/>
    <property type="organism name" value="mouse"/>
</dbReference>
<dbReference type="AGR" id="MGI:2144814"/>
<dbReference type="CTD" id="145581"/>
<dbReference type="MGI" id="MGI:2144814">
    <property type="gene designation" value="Lrfn5"/>
</dbReference>
<dbReference type="VEuPathDB" id="HostDB:ENSMUSG00000035653"/>
<dbReference type="eggNOG" id="KOG0619">
    <property type="taxonomic scope" value="Eukaryota"/>
</dbReference>
<dbReference type="GeneTree" id="ENSGT00940000158296"/>
<dbReference type="HOGENOM" id="CLU_016998_0_0_1"/>
<dbReference type="InParanoid" id="Q8BXA0"/>
<dbReference type="OMA" id="EENAQCF"/>
<dbReference type="OrthoDB" id="6490630at2759"/>
<dbReference type="PhylomeDB" id="Q8BXA0"/>
<dbReference type="TreeFam" id="TF350185"/>
<dbReference type="BioGRID-ORCS" id="238205">
    <property type="hits" value="2 hits in 60 CRISPR screens"/>
</dbReference>
<dbReference type="ChiTaRS" id="Lrfn5">
    <property type="organism name" value="mouse"/>
</dbReference>
<dbReference type="PRO" id="PR:Q8BXA0"/>
<dbReference type="Proteomes" id="UP000000589">
    <property type="component" value="Chromosome 12"/>
</dbReference>
<dbReference type="RNAct" id="Q8BXA0">
    <property type="molecule type" value="protein"/>
</dbReference>
<dbReference type="Bgee" id="ENSMUSG00000035653">
    <property type="expression patterns" value="Expressed in cortical plate and 99 other cell types or tissues"/>
</dbReference>
<dbReference type="GO" id="GO:0009986">
    <property type="term" value="C:cell surface"/>
    <property type="evidence" value="ECO:0000314"/>
    <property type="project" value="MGI"/>
</dbReference>
<dbReference type="GO" id="GO:0098982">
    <property type="term" value="C:GABA-ergic synapse"/>
    <property type="evidence" value="ECO:0000314"/>
    <property type="project" value="SynGO"/>
</dbReference>
<dbReference type="GO" id="GO:0098978">
    <property type="term" value="C:glutamatergic synapse"/>
    <property type="evidence" value="ECO:0000314"/>
    <property type="project" value="SynGO"/>
</dbReference>
<dbReference type="GO" id="GO:0098839">
    <property type="term" value="C:postsynaptic density membrane"/>
    <property type="evidence" value="ECO:0007669"/>
    <property type="project" value="Ensembl"/>
</dbReference>
<dbReference type="GO" id="GO:0050728">
    <property type="term" value="P:negative regulation of inflammatory response"/>
    <property type="evidence" value="ECO:0000250"/>
    <property type="project" value="UniProtKB"/>
</dbReference>
<dbReference type="GO" id="GO:0043031">
    <property type="term" value="P:negative regulation of macrophage activation"/>
    <property type="evidence" value="ECO:0000315"/>
    <property type="project" value="UniProtKB"/>
</dbReference>
<dbReference type="GO" id="GO:1905606">
    <property type="term" value="P:regulation of presynapse assembly"/>
    <property type="evidence" value="ECO:0000314"/>
    <property type="project" value="SynGO"/>
</dbReference>
<dbReference type="GO" id="GO:0099560">
    <property type="term" value="P:synaptic membrane adhesion"/>
    <property type="evidence" value="ECO:0007669"/>
    <property type="project" value="Ensembl"/>
</dbReference>
<dbReference type="CDD" id="cd05764">
    <property type="entry name" value="IgI_SALM5_like"/>
    <property type="match status" value="1"/>
</dbReference>
<dbReference type="FunFam" id="3.80.10.10:FF:000025">
    <property type="entry name" value="Leucine rich repeat and fibronectin type III domain containing 5"/>
    <property type="match status" value="1"/>
</dbReference>
<dbReference type="FunFam" id="2.60.40.10:FF:000235">
    <property type="entry name" value="Leucine-rich repeat and fibronectin type III domain-containing 2"/>
    <property type="match status" value="1"/>
</dbReference>
<dbReference type="FunFam" id="2.60.40.10:FF:000091">
    <property type="entry name" value="Leucine-rich repeat and fibronectin type III domain-containing protein 1"/>
    <property type="match status" value="1"/>
</dbReference>
<dbReference type="FunFam" id="3.80.10.10:FF:000016">
    <property type="entry name" value="Leucine-rich repeat and fibronectin type III domain-containing protein 1"/>
    <property type="match status" value="1"/>
</dbReference>
<dbReference type="Gene3D" id="2.60.40.10">
    <property type="entry name" value="Immunoglobulins"/>
    <property type="match status" value="2"/>
</dbReference>
<dbReference type="Gene3D" id="3.80.10.10">
    <property type="entry name" value="Ribonuclease Inhibitor"/>
    <property type="match status" value="2"/>
</dbReference>
<dbReference type="InterPro" id="IPR036116">
    <property type="entry name" value="FN3_sf"/>
</dbReference>
<dbReference type="InterPro" id="IPR007110">
    <property type="entry name" value="Ig-like_dom"/>
</dbReference>
<dbReference type="InterPro" id="IPR036179">
    <property type="entry name" value="Ig-like_dom_sf"/>
</dbReference>
<dbReference type="InterPro" id="IPR013783">
    <property type="entry name" value="Ig-like_fold"/>
</dbReference>
<dbReference type="InterPro" id="IPR013098">
    <property type="entry name" value="Ig_I-set"/>
</dbReference>
<dbReference type="InterPro" id="IPR003599">
    <property type="entry name" value="Ig_sub"/>
</dbReference>
<dbReference type="InterPro" id="IPR003598">
    <property type="entry name" value="Ig_sub2"/>
</dbReference>
<dbReference type="InterPro" id="IPR001611">
    <property type="entry name" value="Leu-rich_rpt"/>
</dbReference>
<dbReference type="InterPro" id="IPR003591">
    <property type="entry name" value="Leu-rich_rpt_typical-subtyp"/>
</dbReference>
<dbReference type="InterPro" id="IPR050467">
    <property type="entry name" value="LRFN"/>
</dbReference>
<dbReference type="InterPro" id="IPR032675">
    <property type="entry name" value="LRR_dom_sf"/>
</dbReference>
<dbReference type="PANTHER" id="PTHR45842:SF10">
    <property type="entry name" value="LEUCINE-RICH REPEAT AND FIBRONECTIN TYPE-III DOMAIN-CONTAINING PROTEIN 5"/>
    <property type="match status" value="1"/>
</dbReference>
<dbReference type="PANTHER" id="PTHR45842">
    <property type="entry name" value="SYNAPTIC ADHESION-LIKE MOLECULE SALM"/>
    <property type="match status" value="1"/>
</dbReference>
<dbReference type="Pfam" id="PF07679">
    <property type="entry name" value="I-set"/>
    <property type="match status" value="1"/>
</dbReference>
<dbReference type="Pfam" id="PF13855">
    <property type="entry name" value="LRR_8"/>
    <property type="match status" value="2"/>
</dbReference>
<dbReference type="SMART" id="SM00409">
    <property type="entry name" value="IG"/>
    <property type="match status" value="1"/>
</dbReference>
<dbReference type="SMART" id="SM00408">
    <property type="entry name" value="IGc2"/>
    <property type="match status" value="1"/>
</dbReference>
<dbReference type="SMART" id="SM00369">
    <property type="entry name" value="LRR_TYP"/>
    <property type="match status" value="6"/>
</dbReference>
<dbReference type="SUPFAM" id="SSF49265">
    <property type="entry name" value="Fibronectin type III"/>
    <property type="match status" value="1"/>
</dbReference>
<dbReference type="SUPFAM" id="SSF48726">
    <property type="entry name" value="Immunoglobulin"/>
    <property type="match status" value="1"/>
</dbReference>
<dbReference type="SUPFAM" id="SSF52058">
    <property type="entry name" value="L domain-like"/>
    <property type="match status" value="1"/>
</dbReference>
<dbReference type="PROSITE" id="PS50835">
    <property type="entry name" value="IG_LIKE"/>
    <property type="match status" value="1"/>
</dbReference>
<dbReference type="PROSITE" id="PS51450">
    <property type="entry name" value="LRR"/>
    <property type="match status" value="6"/>
</dbReference>
<comment type="function">
    <text evidence="1">Cell adhesion molecule that mediates homophilic cell-cell adhesion in a Ca(2+)-independent manner. Promotes neurite outgrowth in hippocampal neurons (By similarity).</text>
</comment>
<comment type="subunit">
    <text evidence="1">Can form heteromeric complexes with LRFN1, LRFN2, LRFN3 and LFRN4 (By similarity). Able to form homomeric complexes across cell junctions, between adjacent cells (By similarity). Does not interact with DLG1, DLG2 or DLG3 (By similarity). Does not interact with DLG4.</text>
</comment>
<comment type="subcellular location">
    <subcellularLocation>
        <location evidence="5">Membrane</location>
        <topology evidence="5">Single-pass type I membrane protein</topology>
    </subcellularLocation>
</comment>
<comment type="alternative products">
    <event type="alternative splicing"/>
    <isoform>
        <id>Q8BXA0-1</id>
        <name>1</name>
        <sequence type="displayed"/>
    </isoform>
    <isoform>
        <id>Q8BXA0-2</id>
        <name>2</name>
        <sequence type="described" ref="VSP_009299"/>
    </isoform>
</comment>
<comment type="tissue specificity">
    <text evidence="5">Predominantly expressed in the brain, with a weak, but broad expression in the cerebral cortex and diencephalic nuclei. Strongly expressed in both the pyramidal layer and the dentate gyrus of the hippocampus. Also detected in other parts of the central nervous system, including the olfactory bulb, pons, cerebellum, and medulla oblongata, as well as in the peripheral nervous system, such as the ganglia of cranial nerves and the dorsal root ganglion during gestation.</text>
</comment>
<comment type="developmental stage">
    <text evidence="5">Expression starts around 11.5-12.5 dpc. At 11.5 dpc, detected in the outer layer of the telencephalic vesicles. This pattern of expression continues until 17.5 dpc with expression in the cortical plate, but not in the inner layer of the cerebral cortex, including subplate, ventricular zone, and subventricular zone. As also detected in the hippocampus, amygdala and widely in diencephalic nuclei.</text>
</comment>
<comment type="domain">
    <text>Lacks a cytoplasmic PDZ-binding motif, which has been implicated in function of related LRFN proteins.</text>
</comment>
<comment type="PTM">
    <text evidence="5">Glycosylated.</text>
</comment>
<comment type="miscellaneous">
    <molecule>Isoform 2</molecule>
    <text evidence="7">Due to intron retention.</text>
</comment>
<comment type="similarity">
    <text evidence="7">Belongs to the LRFN family.</text>
</comment>
<comment type="sequence caution" evidence="7">
    <conflict type="erroneous initiation">
        <sequence resource="EMBL-CDS" id="BAD90535"/>
    </conflict>
    <text>Extended N-terminus.</text>
</comment>